<organism>
    <name type="scientific">Euglena gracilis</name>
    <dbReference type="NCBI Taxonomy" id="3039"/>
    <lineage>
        <taxon>Eukaryota</taxon>
        <taxon>Discoba</taxon>
        <taxon>Euglenozoa</taxon>
        <taxon>Euglenida</taxon>
        <taxon>Spirocuta</taxon>
        <taxon>Euglenophyceae</taxon>
        <taxon>Euglenales</taxon>
        <taxon>Euglenaceae</taxon>
        <taxon>Euglena</taxon>
    </lineage>
</organism>
<accession>P31477</accession>
<gene>
    <name evidence="1" type="primary">atpE</name>
</gene>
<name>ATPE_EUGGR</name>
<evidence type="ECO:0000255" key="1">
    <source>
        <dbReference type="HAMAP-Rule" id="MF_00530"/>
    </source>
</evidence>
<sequence length="135" mass="15222">MTLDVSIIIPERVFWEKRVEEIILPTLSGQMGVLKDHIPILTGLDIGIILVRQKSSSDWTSLVVTGGFALINSNNVTILVNEAEFGSEINVEQAQISYNSSKHALEMNKDIKRKFELTLNLKKARARFQVTQLKK</sequence>
<proteinExistence type="inferred from homology"/>
<comment type="function">
    <text evidence="1">Produces ATP from ADP in the presence of a proton gradient across the membrane.</text>
</comment>
<comment type="subunit">
    <text evidence="1">F-type ATPases have 2 components, CF(1) - the catalytic core - and CF(0) - the membrane proton channel. CF(1) has five subunits: alpha(3), beta(3), gamma(1), delta(1), epsilon(1). CF(0) has three main subunits: a, b and c.</text>
</comment>
<comment type="subcellular location">
    <subcellularLocation>
        <location evidence="1">Plastid</location>
        <location evidence="1">Chloroplast thylakoid membrane</location>
        <topology evidence="1">Peripheral membrane protein</topology>
    </subcellularLocation>
</comment>
<comment type="similarity">
    <text evidence="1">Belongs to the ATPase epsilon chain family.</text>
</comment>
<feature type="chain" id="PRO_0000188264" description="ATP synthase epsilon chain, chloroplastic">
    <location>
        <begin position="1"/>
        <end position="135"/>
    </location>
</feature>
<dbReference type="EMBL" id="X70810">
    <property type="protein sequence ID" value="CAA50127.1"/>
    <property type="molecule type" value="Genomic_DNA"/>
</dbReference>
<dbReference type="PIR" id="S34913">
    <property type="entry name" value="S34546"/>
</dbReference>
<dbReference type="RefSeq" id="NP_041940.1">
    <property type="nucleotide sequence ID" value="NC_001603.2"/>
</dbReference>
<dbReference type="SMR" id="P31477"/>
<dbReference type="GeneID" id="807497"/>
<dbReference type="GO" id="GO:0009535">
    <property type="term" value="C:chloroplast thylakoid membrane"/>
    <property type="evidence" value="ECO:0007669"/>
    <property type="project" value="UniProtKB-SubCell"/>
</dbReference>
<dbReference type="GO" id="GO:0045259">
    <property type="term" value="C:proton-transporting ATP synthase complex"/>
    <property type="evidence" value="ECO:0007669"/>
    <property type="project" value="UniProtKB-KW"/>
</dbReference>
<dbReference type="GO" id="GO:0005524">
    <property type="term" value="F:ATP binding"/>
    <property type="evidence" value="ECO:0007669"/>
    <property type="project" value="UniProtKB-UniRule"/>
</dbReference>
<dbReference type="GO" id="GO:0046933">
    <property type="term" value="F:proton-transporting ATP synthase activity, rotational mechanism"/>
    <property type="evidence" value="ECO:0007669"/>
    <property type="project" value="UniProtKB-UniRule"/>
</dbReference>
<dbReference type="CDD" id="cd12152">
    <property type="entry name" value="F1-ATPase_delta"/>
    <property type="match status" value="1"/>
</dbReference>
<dbReference type="Gene3D" id="2.60.15.10">
    <property type="entry name" value="F0F1 ATP synthase delta/epsilon subunit, N-terminal"/>
    <property type="match status" value="1"/>
</dbReference>
<dbReference type="HAMAP" id="MF_00530">
    <property type="entry name" value="ATP_synth_epsil_bac"/>
    <property type="match status" value="1"/>
</dbReference>
<dbReference type="InterPro" id="IPR001469">
    <property type="entry name" value="ATP_synth_F1_dsu/esu"/>
</dbReference>
<dbReference type="InterPro" id="IPR020546">
    <property type="entry name" value="ATP_synth_F1_dsu/esu_N"/>
</dbReference>
<dbReference type="InterPro" id="IPR036771">
    <property type="entry name" value="ATPsynth_dsu/esu_N"/>
</dbReference>
<dbReference type="NCBIfam" id="TIGR01216">
    <property type="entry name" value="ATP_synt_epsi"/>
    <property type="match status" value="1"/>
</dbReference>
<dbReference type="PANTHER" id="PTHR13822">
    <property type="entry name" value="ATP SYNTHASE DELTA/EPSILON CHAIN"/>
    <property type="match status" value="1"/>
</dbReference>
<dbReference type="PANTHER" id="PTHR13822:SF10">
    <property type="entry name" value="ATP SYNTHASE EPSILON CHAIN, CHLOROPLASTIC"/>
    <property type="match status" value="1"/>
</dbReference>
<dbReference type="Pfam" id="PF02823">
    <property type="entry name" value="ATP-synt_DE_N"/>
    <property type="match status" value="1"/>
</dbReference>
<dbReference type="SUPFAM" id="SSF51344">
    <property type="entry name" value="Epsilon subunit of F1F0-ATP synthase N-terminal domain"/>
    <property type="match status" value="1"/>
</dbReference>
<protein>
    <recommendedName>
        <fullName evidence="1">ATP synthase epsilon chain, chloroplastic</fullName>
    </recommendedName>
    <alternativeName>
        <fullName evidence="1">ATP synthase F1 sector epsilon subunit</fullName>
    </alternativeName>
    <alternativeName>
        <fullName evidence="1">F-ATPase epsilon subunit</fullName>
    </alternativeName>
</protein>
<geneLocation type="chloroplast"/>
<reference key="1">
    <citation type="journal article" date="1994" name="Curr. Genet.">
        <title>Gene structure and expression of a novel Euglena gracilis chloroplast operon encoding cytochrome b6 and the beta and epsilon subunits of the H(+)-ATP synthase complex.</title>
        <authorList>
            <person name="Hong L."/>
            <person name="Hallick R.B."/>
        </authorList>
    </citation>
    <scope>NUCLEOTIDE SEQUENCE [GENOMIC DNA]</scope>
    <source>
        <strain>Z / UTEX 753</strain>
    </source>
</reference>
<reference key="2">
    <citation type="journal article" date="1993" name="Nucleic Acids Res.">
        <title>Complete sequence of Euglena gracilis chloroplast DNA.</title>
        <authorList>
            <person name="Hallick R.B."/>
            <person name="Hong L."/>
            <person name="Drager R.G."/>
            <person name="Favreau M.R."/>
            <person name="Monfort A."/>
            <person name="Orsat B."/>
            <person name="Spielmann A."/>
            <person name="Stutz E."/>
        </authorList>
    </citation>
    <scope>NUCLEOTIDE SEQUENCE [LARGE SCALE GENOMIC DNA]</scope>
    <source>
        <strain>Z / UTEX 753</strain>
    </source>
</reference>
<keyword id="KW-0066">ATP synthesis</keyword>
<keyword id="KW-0139">CF(1)</keyword>
<keyword id="KW-0150">Chloroplast</keyword>
<keyword id="KW-0375">Hydrogen ion transport</keyword>
<keyword id="KW-0406">Ion transport</keyword>
<keyword id="KW-0472">Membrane</keyword>
<keyword id="KW-0934">Plastid</keyword>
<keyword id="KW-0793">Thylakoid</keyword>
<keyword id="KW-0813">Transport</keyword>